<protein>
    <recommendedName>
        <fullName>Long chronological lifespan protein 2</fullName>
    </recommendedName>
</protein>
<gene>
    <name type="primary">lcl2</name>
    <name type="ORF">ATEG_08008</name>
</gene>
<keyword id="KW-1185">Reference proteome</keyword>
<keyword id="KW-0732">Signal</keyword>
<accession>Q0CE76</accession>
<name>LCL2_ASPTN</name>
<feature type="signal peptide" evidence="2">
    <location>
        <begin position="1"/>
        <end position="20"/>
    </location>
</feature>
<feature type="chain" id="PRO_0000408596" description="Long chronological lifespan protein 2">
    <location>
        <begin position="21"/>
        <end position="119"/>
    </location>
</feature>
<organism>
    <name type="scientific">Aspergillus terreus (strain NIH 2624 / FGSC A1156)</name>
    <dbReference type="NCBI Taxonomy" id="341663"/>
    <lineage>
        <taxon>Eukaryota</taxon>
        <taxon>Fungi</taxon>
        <taxon>Dikarya</taxon>
        <taxon>Ascomycota</taxon>
        <taxon>Pezizomycotina</taxon>
        <taxon>Eurotiomycetes</taxon>
        <taxon>Eurotiomycetidae</taxon>
        <taxon>Eurotiales</taxon>
        <taxon>Aspergillaceae</taxon>
        <taxon>Aspergillus</taxon>
        <taxon>Aspergillus subgen. Circumdati</taxon>
    </lineage>
</organism>
<comment type="function">
    <text evidence="1">Probable component of the endoplasmic reticulum-associated degradation (ERAD) pathway.</text>
</comment>
<comment type="similarity">
    <text evidence="3">Belongs to the LCL2 family.</text>
</comment>
<sequence>MISWIRTLGALLLLASVAQAQFQFFEHMFGNGGHQQQRSQNVPSDSARYQSMWDSAQCDKYLCPGTLACVHFPHHCPCPHPDVEEKVELGEGSAVCVSRGGYRQGEASRKIELARKGLL</sequence>
<reference key="1">
    <citation type="submission" date="2005-09" db="EMBL/GenBank/DDBJ databases">
        <title>Annotation of the Aspergillus terreus NIH2624 genome.</title>
        <authorList>
            <person name="Birren B.W."/>
            <person name="Lander E.S."/>
            <person name="Galagan J.E."/>
            <person name="Nusbaum C."/>
            <person name="Devon K."/>
            <person name="Henn M."/>
            <person name="Ma L.-J."/>
            <person name="Jaffe D.B."/>
            <person name="Butler J."/>
            <person name="Alvarez P."/>
            <person name="Gnerre S."/>
            <person name="Grabherr M."/>
            <person name="Kleber M."/>
            <person name="Mauceli E.W."/>
            <person name="Brockman W."/>
            <person name="Rounsley S."/>
            <person name="Young S.K."/>
            <person name="LaButti K."/>
            <person name="Pushparaj V."/>
            <person name="DeCaprio D."/>
            <person name="Crawford M."/>
            <person name="Koehrsen M."/>
            <person name="Engels R."/>
            <person name="Montgomery P."/>
            <person name="Pearson M."/>
            <person name="Howarth C."/>
            <person name="Larson L."/>
            <person name="Luoma S."/>
            <person name="White J."/>
            <person name="Alvarado L."/>
            <person name="Kodira C.D."/>
            <person name="Zeng Q."/>
            <person name="Oleary S."/>
            <person name="Yandava C."/>
            <person name="Denning D.W."/>
            <person name="Nierman W.C."/>
            <person name="Milne T."/>
            <person name="Madden K."/>
        </authorList>
    </citation>
    <scope>NUCLEOTIDE SEQUENCE [LARGE SCALE GENOMIC DNA]</scope>
    <source>
        <strain>NIH 2624 / FGSC A1156</strain>
    </source>
</reference>
<evidence type="ECO:0000250" key="1"/>
<evidence type="ECO:0000255" key="2"/>
<evidence type="ECO:0000305" key="3"/>
<dbReference type="EMBL" id="CH476605">
    <property type="protein sequence ID" value="EAU31181.1"/>
    <property type="molecule type" value="Genomic_DNA"/>
</dbReference>
<dbReference type="RefSeq" id="XP_001216629.1">
    <property type="nucleotide sequence ID" value="XM_001216629.1"/>
</dbReference>
<dbReference type="STRING" id="341663.Q0CE76"/>
<dbReference type="EnsemblFungi" id="EAU31181">
    <property type="protein sequence ID" value="EAU31181"/>
    <property type="gene ID" value="ATEG_08008"/>
</dbReference>
<dbReference type="GeneID" id="4353445"/>
<dbReference type="VEuPathDB" id="FungiDB:ATEG_08008"/>
<dbReference type="eggNOG" id="ENOG502S416">
    <property type="taxonomic scope" value="Eukaryota"/>
</dbReference>
<dbReference type="HOGENOM" id="CLU_142363_0_0_1"/>
<dbReference type="OMA" id="DNYLCPD"/>
<dbReference type="OrthoDB" id="2234316at2759"/>
<dbReference type="Proteomes" id="UP000007963">
    <property type="component" value="Unassembled WGS sequence"/>
</dbReference>
<dbReference type="GO" id="GO:0036503">
    <property type="term" value="P:ERAD pathway"/>
    <property type="evidence" value="ECO:0007669"/>
    <property type="project" value="TreeGrafter"/>
</dbReference>
<dbReference type="CDD" id="cd23996">
    <property type="entry name" value="LCL2-like"/>
    <property type="match status" value="1"/>
</dbReference>
<dbReference type="InterPro" id="IPR034543">
    <property type="entry name" value="LCL2"/>
</dbReference>
<dbReference type="PANTHER" id="PTHR38425">
    <property type="entry name" value="LONG CHRONOLOGICAL LIFESPAN PROTEIN 2"/>
    <property type="match status" value="1"/>
</dbReference>
<dbReference type="PANTHER" id="PTHR38425:SF1">
    <property type="entry name" value="LONG CHRONOLOGICAL LIFESPAN PROTEIN 2"/>
    <property type="match status" value="1"/>
</dbReference>
<proteinExistence type="inferred from homology"/>